<organism>
    <name type="scientific">Yersinia pseudotuberculosis serotype IB (strain PB1/+)</name>
    <dbReference type="NCBI Taxonomy" id="502801"/>
    <lineage>
        <taxon>Bacteria</taxon>
        <taxon>Pseudomonadati</taxon>
        <taxon>Pseudomonadota</taxon>
        <taxon>Gammaproteobacteria</taxon>
        <taxon>Enterobacterales</taxon>
        <taxon>Yersiniaceae</taxon>
        <taxon>Yersinia</taxon>
    </lineage>
</organism>
<protein>
    <recommendedName>
        <fullName evidence="1">Ferrochelatase</fullName>
        <ecNumber evidence="1">4.98.1.1</ecNumber>
    </recommendedName>
    <alternativeName>
        <fullName evidence="1">Heme synthase</fullName>
    </alternativeName>
    <alternativeName>
        <fullName evidence="1">Protoheme ferro-lyase</fullName>
    </alternativeName>
</protein>
<accession>B2K6Z7</accession>
<sequence>MMQSKPGVLMVNLGTPDAPTSKAIKRYLAEFLSDRRVVDTSPLLWWPLLHGVILPLRSPRVAKLYQSVWMEEGSPLLVYSRRQQKALAARMPDIPVELGMSYGSPNLPEAIEKLLAQGVTNLVILPLYPQYSCSTSAAVWDAVARVLKGYRRLPSISFIRDYAEHPAYISALKQSVERSFAEHGQPDRLVMSFHGIPKRYAQLGDDYPIRCEDTSRALRAALPLPAEKIIMTYQSRFGREPWLTPYTDETLKSLPSQGVKHIQLICPGFSADCLETLEEIKEQNREFFLHAGGEKFEYIPALNDDEGHIALLEQLIRHNI</sequence>
<gene>
    <name evidence="1" type="primary">hemH</name>
    <name type="ordered locus">YPTS_1040</name>
</gene>
<comment type="function">
    <text evidence="1">Catalyzes the ferrous insertion into protoporphyrin IX.</text>
</comment>
<comment type="catalytic activity">
    <reaction evidence="1">
        <text>heme b + 2 H(+) = protoporphyrin IX + Fe(2+)</text>
        <dbReference type="Rhea" id="RHEA:22584"/>
        <dbReference type="ChEBI" id="CHEBI:15378"/>
        <dbReference type="ChEBI" id="CHEBI:29033"/>
        <dbReference type="ChEBI" id="CHEBI:57306"/>
        <dbReference type="ChEBI" id="CHEBI:60344"/>
        <dbReference type="EC" id="4.98.1.1"/>
    </reaction>
</comment>
<comment type="pathway">
    <text evidence="1">Porphyrin-containing compound metabolism; protoheme biosynthesis; protoheme from protoporphyrin-IX: step 1/1.</text>
</comment>
<comment type="subcellular location">
    <subcellularLocation>
        <location evidence="1">Cytoplasm</location>
    </subcellularLocation>
</comment>
<comment type="similarity">
    <text evidence="1">Belongs to the ferrochelatase family.</text>
</comment>
<dbReference type="EC" id="4.98.1.1" evidence="1"/>
<dbReference type="EMBL" id="CP001048">
    <property type="protein sequence ID" value="ACC88021.1"/>
    <property type="molecule type" value="Genomic_DNA"/>
</dbReference>
<dbReference type="RefSeq" id="WP_002208599.1">
    <property type="nucleotide sequence ID" value="NZ_CP009780.1"/>
</dbReference>
<dbReference type="SMR" id="B2K6Z7"/>
<dbReference type="GeneID" id="57975594"/>
<dbReference type="KEGG" id="ypb:YPTS_1040"/>
<dbReference type="UniPathway" id="UPA00252">
    <property type="reaction ID" value="UER00325"/>
</dbReference>
<dbReference type="GO" id="GO:0005737">
    <property type="term" value="C:cytoplasm"/>
    <property type="evidence" value="ECO:0007669"/>
    <property type="project" value="UniProtKB-SubCell"/>
</dbReference>
<dbReference type="GO" id="GO:0004325">
    <property type="term" value="F:ferrochelatase activity"/>
    <property type="evidence" value="ECO:0007669"/>
    <property type="project" value="UniProtKB-UniRule"/>
</dbReference>
<dbReference type="GO" id="GO:0046872">
    <property type="term" value="F:metal ion binding"/>
    <property type="evidence" value="ECO:0007669"/>
    <property type="project" value="UniProtKB-KW"/>
</dbReference>
<dbReference type="GO" id="GO:0006783">
    <property type="term" value="P:heme biosynthetic process"/>
    <property type="evidence" value="ECO:0007669"/>
    <property type="project" value="UniProtKB-UniRule"/>
</dbReference>
<dbReference type="CDD" id="cd00419">
    <property type="entry name" value="Ferrochelatase_C"/>
    <property type="match status" value="1"/>
</dbReference>
<dbReference type="CDD" id="cd03411">
    <property type="entry name" value="Ferrochelatase_N"/>
    <property type="match status" value="1"/>
</dbReference>
<dbReference type="FunFam" id="3.40.50.1400:FF:000004">
    <property type="entry name" value="Ferrochelatase"/>
    <property type="match status" value="1"/>
</dbReference>
<dbReference type="Gene3D" id="3.40.50.1400">
    <property type="match status" value="2"/>
</dbReference>
<dbReference type="HAMAP" id="MF_00323">
    <property type="entry name" value="Ferrochelatase"/>
    <property type="match status" value="1"/>
</dbReference>
<dbReference type="InterPro" id="IPR001015">
    <property type="entry name" value="Ferrochelatase"/>
</dbReference>
<dbReference type="InterPro" id="IPR019772">
    <property type="entry name" value="Ferrochelatase_AS"/>
</dbReference>
<dbReference type="InterPro" id="IPR033644">
    <property type="entry name" value="Ferrochelatase_C"/>
</dbReference>
<dbReference type="InterPro" id="IPR033659">
    <property type="entry name" value="Ferrochelatase_N"/>
</dbReference>
<dbReference type="NCBIfam" id="TIGR00109">
    <property type="entry name" value="hemH"/>
    <property type="match status" value="1"/>
</dbReference>
<dbReference type="PANTHER" id="PTHR11108">
    <property type="entry name" value="FERROCHELATASE"/>
    <property type="match status" value="1"/>
</dbReference>
<dbReference type="PANTHER" id="PTHR11108:SF1">
    <property type="entry name" value="FERROCHELATASE, MITOCHONDRIAL"/>
    <property type="match status" value="1"/>
</dbReference>
<dbReference type="Pfam" id="PF00762">
    <property type="entry name" value="Ferrochelatase"/>
    <property type="match status" value="1"/>
</dbReference>
<dbReference type="SUPFAM" id="SSF53800">
    <property type="entry name" value="Chelatase"/>
    <property type="match status" value="1"/>
</dbReference>
<dbReference type="PROSITE" id="PS00534">
    <property type="entry name" value="FERROCHELATASE"/>
    <property type="match status" value="1"/>
</dbReference>
<keyword id="KW-0963">Cytoplasm</keyword>
<keyword id="KW-0350">Heme biosynthesis</keyword>
<keyword id="KW-0408">Iron</keyword>
<keyword id="KW-0456">Lyase</keyword>
<keyword id="KW-0479">Metal-binding</keyword>
<keyword id="KW-0627">Porphyrin biosynthesis</keyword>
<name>HEMH_YERPB</name>
<feature type="chain" id="PRO_1000116092" description="Ferrochelatase">
    <location>
        <begin position="1"/>
        <end position="320"/>
    </location>
</feature>
<feature type="binding site" evidence="1">
    <location>
        <position position="194"/>
    </location>
    <ligand>
        <name>Fe cation</name>
        <dbReference type="ChEBI" id="CHEBI:24875"/>
    </ligand>
</feature>
<feature type="binding site" evidence="1">
    <location>
        <position position="275"/>
    </location>
    <ligand>
        <name>Fe cation</name>
        <dbReference type="ChEBI" id="CHEBI:24875"/>
    </ligand>
</feature>
<reference key="1">
    <citation type="submission" date="2008-04" db="EMBL/GenBank/DDBJ databases">
        <title>Complete sequence of Yersinia pseudotuberculosis PB1/+.</title>
        <authorList>
            <person name="Copeland A."/>
            <person name="Lucas S."/>
            <person name="Lapidus A."/>
            <person name="Glavina del Rio T."/>
            <person name="Dalin E."/>
            <person name="Tice H."/>
            <person name="Bruce D."/>
            <person name="Goodwin L."/>
            <person name="Pitluck S."/>
            <person name="Munk A.C."/>
            <person name="Brettin T."/>
            <person name="Detter J.C."/>
            <person name="Han C."/>
            <person name="Tapia R."/>
            <person name="Schmutz J."/>
            <person name="Larimer F."/>
            <person name="Land M."/>
            <person name="Hauser L."/>
            <person name="Challacombe J.F."/>
            <person name="Green L."/>
            <person name="Lindler L.E."/>
            <person name="Nikolich M.P."/>
            <person name="Richardson P."/>
        </authorList>
    </citation>
    <scope>NUCLEOTIDE SEQUENCE [LARGE SCALE GENOMIC DNA]</scope>
    <source>
        <strain>PB1/+</strain>
    </source>
</reference>
<evidence type="ECO:0000255" key="1">
    <source>
        <dbReference type="HAMAP-Rule" id="MF_00323"/>
    </source>
</evidence>
<proteinExistence type="inferred from homology"/>